<sequence length="77" mass="9138">MKEQKWTHEGLITESLPNGMFRVRLDNEDLILGYVSGKIRRSFIRILPGDRVKIEVSRYDSTRGRIIYRLRNKDSKD</sequence>
<comment type="function">
    <text evidence="1">One of the essential components for the initiation of protein synthesis. Stabilizes the binding of IF-2 and IF-3 on the 30S subunit to which N-formylmethionyl-tRNA(fMet) subsequently binds. Helps modulate mRNA selection, yielding the 30S pre-initiation complex (PIC). Upon addition of the 50S ribosomal subunit IF-1, IF-2 and IF-3 are released leaving the mature 70S translation initiation complex.</text>
</comment>
<comment type="subunit">
    <text evidence="1">Component of the 30S ribosomal translation pre-initiation complex which assembles on the 30S ribosome in the order IF-2 and IF-3, IF-1 and N-formylmethionyl-tRNA(fMet); mRNA recruitment can occur at any time during PIC assembly.</text>
</comment>
<comment type="subcellular location">
    <subcellularLocation>
        <location evidence="1">Plastid</location>
        <location evidence="1">Chloroplast</location>
    </subcellularLocation>
</comment>
<comment type="similarity">
    <text evidence="1">Belongs to the IF-1 family.</text>
</comment>
<gene>
    <name evidence="1" type="primary">infA</name>
</gene>
<protein>
    <recommendedName>
        <fullName evidence="1">Translation initiation factor IF-1, chloroplastic</fullName>
    </recommendedName>
</protein>
<name>IF1C_COFAR</name>
<organism>
    <name type="scientific">Coffea arabica</name>
    <name type="common">Arabian coffee</name>
    <dbReference type="NCBI Taxonomy" id="13443"/>
    <lineage>
        <taxon>Eukaryota</taxon>
        <taxon>Viridiplantae</taxon>
        <taxon>Streptophyta</taxon>
        <taxon>Embryophyta</taxon>
        <taxon>Tracheophyta</taxon>
        <taxon>Spermatophyta</taxon>
        <taxon>Magnoliopsida</taxon>
        <taxon>eudicotyledons</taxon>
        <taxon>Gunneridae</taxon>
        <taxon>Pentapetalae</taxon>
        <taxon>asterids</taxon>
        <taxon>lamiids</taxon>
        <taxon>Gentianales</taxon>
        <taxon>Rubiaceae</taxon>
        <taxon>Ixoroideae</taxon>
        <taxon>Gardenieae complex</taxon>
        <taxon>Bertiereae - Coffeeae clade</taxon>
        <taxon>Coffeeae</taxon>
        <taxon>Coffea</taxon>
    </lineage>
</organism>
<feature type="chain" id="PRO_0000275389" description="Translation initiation factor IF-1, chloroplastic">
    <location>
        <begin position="1"/>
        <end position="77"/>
    </location>
</feature>
<feature type="domain" description="S1-like" evidence="1">
    <location>
        <begin position="1"/>
        <end position="71"/>
    </location>
</feature>
<keyword id="KW-0150">Chloroplast</keyword>
<keyword id="KW-0396">Initiation factor</keyword>
<keyword id="KW-0934">Plastid</keyword>
<keyword id="KW-0648">Protein biosynthesis</keyword>
<keyword id="KW-1185">Reference proteome</keyword>
<keyword id="KW-0694">RNA-binding</keyword>
<keyword id="KW-0699">rRNA-binding</keyword>
<geneLocation type="chloroplast"/>
<evidence type="ECO:0000255" key="1">
    <source>
        <dbReference type="HAMAP-Rule" id="MF_00075"/>
    </source>
</evidence>
<dbReference type="EMBL" id="EF044213">
    <property type="protein sequence ID" value="ABJ89713.1"/>
    <property type="molecule type" value="Genomic_DNA"/>
</dbReference>
<dbReference type="RefSeq" id="YP_817517.1">
    <property type="nucleotide sequence ID" value="NC_008535.1"/>
</dbReference>
<dbReference type="SMR" id="A0A370"/>
<dbReference type="GeneID" id="4421814"/>
<dbReference type="OrthoDB" id="1714886at2759"/>
<dbReference type="Proteomes" id="UP000515148">
    <property type="component" value="Chloroplast Pltd"/>
</dbReference>
<dbReference type="GO" id="GO:0009507">
    <property type="term" value="C:chloroplast"/>
    <property type="evidence" value="ECO:0007669"/>
    <property type="project" value="UniProtKB-SubCell"/>
</dbReference>
<dbReference type="GO" id="GO:0005829">
    <property type="term" value="C:cytosol"/>
    <property type="evidence" value="ECO:0007669"/>
    <property type="project" value="TreeGrafter"/>
</dbReference>
<dbReference type="GO" id="GO:0043022">
    <property type="term" value="F:ribosome binding"/>
    <property type="evidence" value="ECO:0007669"/>
    <property type="project" value="UniProtKB-UniRule"/>
</dbReference>
<dbReference type="GO" id="GO:0019843">
    <property type="term" value="F:rRNA binding"/>
    <property type="evidence" value="ECO:0007669"/>
    <property type="project" value="UniProtKB-UniRule"/>
</dbReference>
<dbReference type="GO" id="GO:0003743">
    <property type="term" value="F:translation initiation factor activity"/>
    <property type="evidence" value="ECO:0007669"/>
    <property type="project" value="UniProtKB-UniRule"/>
</dbReference>
<dbReference type="CDD" id="cd04451">
    <property type="entry name" value="S1_IF1"/>
    <property type="match status" value="1"/>
</dbReference>
<dbReference type="FunFam" id="2.40.50.140:FF:000019">
    <property type="entry name" value="Translation initiation factor IF-1, chloroplastic"/>
    <property type="match status" value="1"/>
</dbReference>
<dbReference type="Gene3D" id="2.40.50.140">
    <property type="entry name" value="Nucleic acid-binding proteins"/>
    <property type="match status" value="1"/>
</dbReference>
<dbReference type="HAMAP" id="MF_00075">
    <property type="entry name" value="IF_1"/>
    <property type="match status" value="1"/>
</dbReference>
<dbReference type="InterPro" id="IPR012340">
    <property type="entry name" value="NA-bd_OB-fold"/>
</dbReference>
<dbReference type="InterPro" id="IPR006196">
    <property type="entry name" value="RNA-binding_domain_S1_IF1"/>
</dbReference>
<dbReference type="InterPro" id="IPR003029">
    <property type="entry name" value="S1_domain"/>
</dbReference>
<dbReference type="InterPro" id="IPR004368">
    <property type="entry name" value="TIF_IF1"/>
</dbReference>
<dbReference type="NCBIfam" id="TIGR00008">
    <property type="entry name" value="infA"/>
    <property type="match status" value="1"/>
</dbReference>
<dbReference type="PANTHER" id="PTHR33370">
    <property type="entry name" value="TRANSLATION INITIATION FACTOR IF-1, CHLOROPLASTIC"/>
    <property type="match status" value="1"/>
</dbReference>
<dbReference type="PANTHER" id="PTHR33370:SF1">
    <property type="entry name" value="TRANSLATION INITIATION FACTOR IF-1, CHLOROPLASTIC"/>
    <property type="match status" value="1"/>
</dbReference>
<dbReference type="Pfam" id="PF01176">
    <property type="entry name" value="eIF-1a"/>
    <property type="match status" value="1"/>
</dbReference>
<dbReference type="SMART" id="SM00316">
    <property type="entry name" value="S1"/>
    <property type="match status" value="1"/>
</dbReference>
<dbReference type="SUPFAM" id="SSF50249">
    <property type="entry name" value="Nucleic acid-binding proteins"/>
    <property type="match status" value="1"/>
</dbReference>
<dbReference type="PROSITE" id="PS50832">
    <property type="entry name" value="S1_IF1_TYPE"/>
    <property type="match status" value="1"/>
</dbReference>
<proteinExistence type="inferred from homology"/>
<reference key="1">
    <citation type="journal article" date="2007" name="Plant Biotechnol. J.">
        <title>The complete nucleotide sequence of the coffee (Coffea arabica L.) chloroplast genome: organization and implications for biotechnology and phylogenetic relationships amongst angiosperms.</title>
        <authorList>
            <person name="Samson N."/>
            <person name="Bausher M.G."/>
            <person name="Lee S.-B."/>
            <person name="Jansen R.K."/>
            <person name="Daniell H."/>
        </authorList>
    </citation>
    <scope>NUCLEOTIDE SEQUENCE [LARGE SCALE GENOMIC DNA]</scope>
</reference>
<accession>A0A370</accession>